<evidence type="ECO:0000250" key="1">
    <source>
        <dbReference type="UniProtKB" id="P0C931"/>
    </source>
</evidence>
<evidence type="ECO:0000250" key="2">
    <source>
        <dbReference type="UniProtKB" id="P0CJ36"/>
    </source>
</evidence>
<evidence type="ECO:0000255" key="3"/>
<evidence type="ECO:0000269" key="4">
    <source>
    </source>
</evidence>
<evidence type="ECO:0000269" key="5">
    <source>
    </source>
</evidence>
<evidence type="ECO:0000303" key="6">
    <source>
    </source>
</evidence>
<evidence type="ECO:0000305" key="7"/>
<evidence type="ECO:0000305" key="8">
    <source>
    </source>
</evidence>
<evidence type="ECO:0000305" key="9">
    <source>
    </source>
</evidence>
<evidence type="ECO:0000312" key="10">
    <source>
        <dbReference type="EMBL" id="ACZ37392.1"/>
    </source>
</evidence>
<organism>
    <name type="scientific">Eumenes pomiformis</name>
    <name type="common">Potter wasp</name>
    <name type="synonym">Vespa pomiformis</name>
    <dbReference type="NCBI Taxonomy" id="693051"/>
    <lineage>
        <taxon>Eukaryota</taxon>
        <taxon>Metazoa</taxon>
        <taxon>Ecdysozoa</taxon>
        <taxon>Arthropoda</taxon>
        <taxon>Hexapoda</taxon>
        <taxon>Insecta</taxon>
        <taxon>Pterygota</taxon>
        <taxon>Neoptera</taxon>
        <taxon>Endopterygota</taxon>
        <taxon>Hymenoptera</taxon>
        <taxon>Apocrita</taxon>
        <taxon>Aculeata</taxon>
        <taxon>Vespoidea</taxon>
        <taxon>Vespidae</taxon>
        <taxon>Eumeninae</taxon>
        <taxon>Eumenes</taxon>
    </lineage>
</organism>
<keyword id="KW-0027">Amidation</keyword>
<keyword id="KW-0044">Antibiotic</keyword>
<keyword id="KW-0929">Antimicrobial</keyword>
<keyword id="KW-0204">Cytolysis</keyword>
<keyword id="KW-0295">Fungicide</keyword>
<keyword id="KW-0391">Immunity</keyword>
<keyword id="KW-0399">Innate immunity</keyword>
<keyword id="KW-0472">Membrane</keyword>
<keyword id="KW-0677">Repeat</keyword>
<keyword id="KW-0964">Secreted</keyword>
<keyword id="KW-0732">Signal</keyword>
<keyword id="KW-1052">Target cell membrane</keyword>
<keyword id="KW-1053">Target membrane</keyword>
<keyword id="KW-0800">Toxin</keyword>
<keyword id="KW-0812">Transmembrane</keyword>
<reference key="1">
    <citation type="journal article" date="2010" name="Toxicon">
        <title>Differential gene expression profiles in the venom gland/sac of Eumenes pomiformis (Hymenoptera: Eumenidae).</title>
        <authorList>
            <person name="Baek J.H."/>
            <person name="Lee S.H."/>
        </authorList>
    </citation>
    <scope>NUCLEOTIDE SEQUENCE [MRNA]</scope>
    <scope>MASS SPECTROMETRY</scope>
    <scope>SUBCELLULAR LOCATION</scope>
    <source>
        <tissue>Venom</tissue>
        <tissue>Venom gland</tissue>
    </source>
</reference>
<reference key="2">
    <citation type="journal article" date="2011" name="Peptides">
        <title>Venom peptides from solitary hunting wasps induce feeding disorder in lepidopteran larvae.</title>
        <authorList>
            <person name="Baek J.H."/>
            <person name="Ji Y."/>
            <person name="Shin J.S."/>
            <person name="Lee S."/>
            <person name="Lee S.H."/>
        </authorList>
    </citation>
    <scope>FUNCTION</scope>
    <scope>BIOASSAY</scope>
    <scope>SYNTHESIS OF 49-63</scope>
</reference>
<reference key="3">
    <citation type="journal article" date="2016" name="Toxins">
        <title>Peptide toxins in solitary wasp venoms.</title>
        <authorList>
            <person name="Konno K."/>
            <person name="Kazuma K."/>
            <person name="Nihei K."/>
        </authorList>
    </citation>
    <scope>REVIEW</scope>
</reference>
<accession>D1MEI6</accession>
<sequence length="63" mass="6546">MRGTSFILFAVVVILGFLHANAEPLANPAPLANPDPLANADPLADPEAINLKGLIKKVASLLT</sequence>
<dbReference type="EMBL" id="GU136231">
    <property type="protein sequence ID" value="ACZ37392.1"/>
    <property type="molecule type" value="mRNA"/>
</dbReference>
<dbReference type="GO" id="GO:0005576">
    <property type="term" value="C:extracellular region"/>
    <property type="evidence" value="ECO:0007669"/>
    <property type="project" value="UniProtKB-SubCell"/>
</dbReference>
<dbReference type="GO" id="GO:0016020">
    <property type="term" value="C:membrane"/>
    <property type="evidence" value="ECO:0007669"/>
    <property type="project" value="UniProtKB-KW"/>
</dbReference>
<dbReference type="GO" id="GO:0044218">
    <property type="term" value="C:other organism cell membrane"/>
    <property type="evidence" value="ECO:0007669"/>
    <property type="project" value="UniProtKB-KW"/>
</dbReference>
<dbReference type="GO" id="GO:0090729">
    <property type="term" value="F:toxin activity"/>
    <property type="evidence" value="ECO:0007669"/>
    <property type="project" value="UniProtKB-KW"/>
</dbReference>
<dbReference type="GO" id="GO:0042742">
    <property type="term" value="P:defense response to bacterium"/>
    <property type="evidence" value="ECO:0007669"/>
    <property type="project" value="UniProtKB-KW"/>
</dbReference>
<dbReference type="GO" id="GO:0050832">
    <property type="term" value="P:defense response to fungus"/>
    <property type="evidence" value="ECO:0007669"/>
    <property type="project" value="UniProtKB-KW"/>
</dbReference>
<dbReference type="GO" id="GO:0045087">
    <property type="term" value="P:innate immune response"/>
    <property type="evidence" value="ECO:0007669"/>
    <property type="project" value="UniProtKB-KW"/>
</dbReference>
<dbReference type="GO" id="GO:0031640">
    <property type="term" value="P:killing of cells of another organism"/>
    <property type="evidence" value="ECO:0007669"/>
    <property type="project" value="UniProtKB-KW"/>
</dbReference>
<protein>
    <recommendedName>
        <fullName evidence="7">Eumenitin VP1</fullName>
    </recommendedName>
    <alternativeName>
        <fullName evidence="6">Venom peptide 1</fullName>
        <shortName evidence="6">EpVP1</shortName>
        <shortName evidence="10">VP1</shortName>
    </alternativeName>
</protein>
<proteinExistence type="evidence at protein level"/>
<feature type="signal peptide" evidence="3">
    <location>
        <begin position="1"/>
        <end position="22"/>
    </location>
</feature>
<feature type="propeptide" id="PRO_0000453659" evidence="8">
    <location>
        <begin position="23"/>
        <end position="48"/>
    </location>
</feature>
<feature type="peptide" id="PRO_5003025094" description="Eumenitin VP1" evidence="4">
    <location>
        <begin position="49"/>
        <end position="63"/>
    </location>
</feature>
<feature type="repeat" description="AXPX 1" evidence="7">
    <location>
        <begin position="22"/>
        <end position="25"/>
    </location>
</feature>
<feature type="repeat" description="AXPX 2" evidence="7">
    <location>
        <begin position="26"/>
        <end position="29"/>
    </location>
</feature>
<feature type="repeat" description="AXPX 3" evidence="7">
    <location>
        <begin position="32"/>
        <end position="35"/>
    </location>
</feature>
<feature type="repeat" description="AXPX 4" evidence="7">
    <location>
        <begin position="40"/>
        <end position="43"/>
    </location>
</feature>
<feature type="repeat" description="AXPX 5" evidence="7">
    <location>
        <begin position="44"/>
        <end position="47"/>
    </location>
</feature>
<comment type="function">
    <text evidence="5">Antimicrobial peptide with activities against the fungi B.cinerea (MIC=5 uM) and C.albicans (MIC=100 uM), the Gram-negative bacterium E.coli (MIC=25 uM) and the Gram-positive bacterium S.aureus (MIC=100 uM) (PubMed:21184791). Shows cytolytic activity against insect cell lines (PubMed:21184791). Has no hemolytic activity against human erythrocytes (PubMed:21184791). In vivo, peptide injection in the vicinity of the head and thorax of lepidopteran larvae induces feeding disorder followed by death due to starvation (PubMed:21184791).</text>
</comment>
<comment type="subcellular location">
    <subcellularLocation>
        <location evidence="4">Secreted</location>
    </subcellularLocation>
    <subcellularLocation>
        <location evidence="2">Target cell membrane</location>
    </subcellularLocation>
    <text evidence="1 9">Has an amphipathic alpha-helical conformation (Probable). Forms pores in membranes (By similarity).</text>
</comment>
<comment type="tissue specificity">
    <text evidence="8">Expressed by the venom gland.</text>
</comment>
<comment type="mass spectrometry" mass="1610.1" method="Electrospray" evidence="4"/>
<comment type="similarity">
    <text evidence="7">Belongs to the MCD family. Eumenitin subfamily.</text>
</comment>
<name>EUME1_EUMPO</name>